<gene>
    <name type="primary">SPO16</name>
    <name type="ordered locus">YHR153C</name>
</gene>
<feature type="chain" id="PRO_0000072136" description="Sporulation-specific protein 16">
    <location>
        <begin position="1"/>
        <end position="198"/>
    </location>
</feature>
<feature type="strand" evidence="1">
    <location>
        <begin position="7"/>
        <end position="14"/>
    </location>
</feature>
<feature type="strand" evidence="1">
    <location>
        <begin position="22"/>
        <end position="29"/>
    </location>
</feature>
<feature type="helix" evidence="1">
    <location>
        <begin position="31"/>
        <end position="39"/>
    </location>
</feature>
<feature type="helix" evidence="1">
    <location>
        <begin position="44"/>
        <end position="67"/>
    </location>
</feature>
<feature type="strand" evidence="1">
    <location>
        <begin position="78"/>
        <end position="85"/>
    </location>
</feature>
<feature type="helix" evidence="1">
    <location>
        <begin position="91"/>
        <end position="104"/>
    </location>
</feature>
<feature type="helix" evidence="1">
    <location>
        <begin position="108"/>
        <end position="112"/>
    </location>
</feature>
<feature type="strand" evidence="1">
    <location>
        <begin position="113"/>
        <end position="119"/>
    </location>
</feature>
<feature type="helix" evidence="1">
    <location>
        <begin position="125"/>
        <end position="131"/>
    </location>
</feature>
<feature type="helix" evidence="1">
    <location>
        <begin position="133"/>
        <end position="143"/>
    </location>
</feature>
<feature type="turn" evidence="1">
    <location>
        <begin position="144"/>
        <end position="147"/>
    </location>
</feature>
<feature type="helix" evidence="1">
    <location>
        <begin position="150"/>
        <end position="153"/>
    </location>
</feature>
<feature type="helix" evidence="1">
    <location>
        <begin position="157"/>
        <end position="171"/>
    </location>
</feature>
<feature type="helix" evidence="1">
    <location>
        <begin position="176"/>
        <end position="178"/>
    </location>
</feature>
<feature type="helix" evidence="1">
    <location>
        <begin position="179"/>
        <end position="185"/>
    </location>
</feature>
<feature type="helix" evidence="1">
    <location>
        <begin position="189"/>
        <end position="195"/>
    </location>
</feature>
<evidence type="ECO:0007829" key="1">
    <source>
        <dbReference type="PDB" id="6BZG"/>
    </source>
</evidence>
<proteinExistence type="evidence at protein level"/>
<dbReference type="EMBL" id="M32653">
    <property type="protein sequence ID" value="AAA35075.1"/>
    <property type="molecule type" value="Genomic_DNA"/>
</dbReference>
<dbReference type="EMBL" id="U10397">
    <property type="protein sequence ID" value="AAB68989.1"/>
    <property type="molecule type" value="Genomic_DNA"/>
</dbReference>
<dbReference type="EMBL" id="BK006934">
    <property type="protein sequence ID" value="DAA06846.1"/>
    <property type="molecule type" value="Genomic_DNA"/>
</dbReference>
<dbReference type="PIR" id="A36321">
    <property type="entry name" value="A36321"/>
</dbReference>
<dbReference type="RefSeq" id="NP_012023.1">
    <property type="nucleotide sequence ID" value="NM_001179284.1"/>
</dbReference>
<dbReference type="PDB" id="6BZF">
    <property type="method" value="X-ray"/>
    <property type="resolution" value="2.29 A"/>
    <property type="chains" value="A/C/E/G=2-198"/>
</dbReference>
<dbReference type="PDB" id="6BZG">
    <property type="method" value="X-ray"/>
    <property type="resolution" value="2.13 A"/>
    <property type="chains" value="A=2-198"/>
</dbReference>
<dbReference type="PDBsum" id="6BZF"/>
<dbReference type="PDBsum" id="6BZG"/>
<dbReference type="SMR" id="P17122"/>
<dbReference type="BioGRID" id="36587">
    <property type="interactions" value="57"/>
</dbReference>
<dbReference type="ComplexPortal" id="CPX-1386">
    <property type="entry name" value="Synapsis initiation complex"/>
</dbReference>
<dbReference type="ComplexPortal" id="CPX-5441">
    <property type="entry name" value="SPO16:ZIP2"/>
</dbReference>
<dbReference type="ComplexPortal" id="CPX-5442">
    <property type="entry name" value="ZZS complex"/>
</dbReference>
<dbReference type="FunCoup" id="P17122">
    <property type="interactions" value="51"/>
</dbReference>
<dbReference type="IntAct" id="P17122">
    <property type="interactions" value="1"/>
</dbReference>
<dbReference type="STRING" id="4932.YHR153C"/>
<dbReference type="PaxDb" id="4932-YHR153C"/>
<dbReference type="PeptideAtlas" id="P17122"/>
<dbReference type="EnsemblFungi" id="YHR153C_mRNA">
    <property type="protein sequence ID" value="YHR153C"/>
    <property type="gene ID" value="YHR153C"/>
</dbReference>
<dbReference type="GeneID" id="856558"/>
<dbReference type="KEGG" id="sce:YHR153C"/>
<dbReference type="AGR" id="SGD:S000001196"/>
<dbReference type="SGD" id="S000001196">
    <property type="gene designation" value="SPO16"/>
</dbReference>
<dbReference type="VEuPathDB" id="FungiDB:YHR153C"/>
<dbReference type="eggNOG" id="ENOG502SDYW">
    <property type="taxonomic scope" value="Eukaryota"/>
</dbReference>
<dbReference type="HOGENOM" id="CLU_1378842_0_0_1"/>
<dbReference type="InParanoid" id="P17122"/>
<dbReference type="OMA" id="FWDELIF"/>
<dbReference type="OrthoDB" id="4042759at2759"/>
<dbReference type="BioCyc" id="YEAST:G3O-31188-MONOMER"/>
<dbReference type="BioGRID-ORCS" id="856558">
    <property type="hits" value="0 hits in 10 CRISPR screens"/>
</dbReference>
<dbReference type="PRO" id="PR:P17122"/>
<dbReference type="Proteomes" id="UP000002311">
    <property type="component" value="Chromosome VIII"/>
</dbReference>
<dbReference type="RNAct" id="P17122">
    <property type="molecule type" value="protein"/>
</dbReference>
<dbReference type="GO" id="GO:0000794">
    <property type="term" value="C:condensed nuclear chromosome"/>
    <property type="evidence" value="ECO:0000303"/>
    <property type="project" value="ComplexPortal"/>
</dbReference>
<dbReference type="GO" id="GO:0000228">
    <property type="term" value="C:nuclear chromosome"/>
    <property type="evidence" value="ECO:0000314"/>
    <property type="project" value="SGD"/>
</dbReference>
<dbReference type="GO" id="GO:0106069">
    <property type="term" value="C:synapsis initiation complex"/>
    <property type="evidence" value="ECO:0000303"/>
    <property type="project" value="ComplexPortal"/>
</dbReference>
<dbReference type="GO" id="GO:0000217">
    <property type="term" value="F:DNA secondary structure binding"/>
    <property type="evidence" value="ECO:0000314"/>
    <property type="project" value="SGD"/>
</dbReference>
<dbReference type="GO" id="GO:0030437">
    <property type="term" value="P:ascospore formation"/>
    <property type="evidence" value="ECO:0000315"/>
    <property type="project" value="SGD"/>
</dbReference>
<dbReference type="GO" id="GO:0007129">
    <property type="term" value="P:homologous chromosome pairing at meiosis"/>
    <property type="evidence" value="ECO:0000303"/>
    <property type="project" value="ComplexPortal"/>
</dbReference>
<dbReference type="GO" id="GO:0035825">
    <property type="term" value="P:homologous recombination"/>
    <property type="evidence" value="ECO:0000303"/>
    <property type="project" value="ComplexPortal"/>
</dbReference>
<dbReference type="GO" id="GO:0033235">
    <property type="term" value="P:positive regulation of protein sumoylation"/>
    <property type="evidence" value="ECO:0000315"/>
    <property type="project" value="SGD"/>
</dbReference>
<dbReference type="GO" id="GO:0016925">
    <property type="term" value="P:protein sumoylation"/>
    <property type="evidence" value="ECO:0000303"/>
    <property type="project" value="ComplexPortal"/>
</dbReference>
<dbReference type="GO" id="GO:0007131">
    <property type="term" value="P:reciprocal meiotic recombination"/>
    <property type="evidence" value="ECO:0000303"/>
    <property type="project" value="ComplexPortal"/>
</dbReference>
<dbReference type="GO" id="GO:0010520">
    <property type="term" value="P:regulation of reciprocal meiotic recombination"/>
    <property type="evidence" value="ECO:0000315"/>
    <property type="project" value="SGD"/>
</dbReference>
<dbReference type="GO" id="GO:0090173">
    <property type="term" value="P:regulation of synaptonemal complex assembly"/>
    <property type="evidence" value="ECO:0000303"/>
    <property type="project" value="ComplexPortal"/>
</dbReference>
<dbReference type="GO" id="GO:0007130">
    <property type="term" value="P:synaptonemal complex assembly"/>
    <property type="evidence" value="ECO:0000315"/>
    <property type="project" value="SGD"/>
</dbReference>
<dbReference type="InterPro" id="IPR048323">
    <property type="entry name" value="Spo16_C"/>
</dbReference>
<dbReference type="InterPro" id="IPR043637">
    <property type="entry name" value="Spo16_N"/>
</dbReference>
<dbReference type="Pfam" id="PF21698">
    <property type="entry name" value="Spo16_C"/>
    <property type="match status" value="1"/>
</dbReference>
<dbReference type="Pfam" id="PF19225">
    <property type="entry name" value="Spo16_N"/>
    <property type="match status" value="1"/>
</dbReference>
<accession>P17122</accession>
<accession>D3DLA2</accession>
<protein>
    <recommendedName>
        <fullName>Sporulation-specific protein 16</fullName>
    </recommendedName>
</protein>
<sequence>MSEFFWDVQKIQEISNVEEHSVVKCVTVNTSRLISQLNEELQDEESGVNFIVTQLQLLINNVYEKIQKSPGVPAHRSLMINLNFTRLKFSIAYWDILLERSLDLINGPSKTGARYFITEVTPVDRSRYVENNQYFLAFKANQRLTRNSVDMDEFIDFEILIKQIIFDLFKKNGIPDQDFEAILSRFHNLESLVVAFNE</sequence>
<organism>
    <name type="scientific">Saccharomyces cerevisiae (strain ATCC 204508 / S288c)</name>
    <name type="common">Baker's yeast</name>
    <dbReference type="NCBI Taxonomy" id="559292"/>
    <lineage>
        <taxon>Eukaryota</taxon>
        <taxon>Fungi</taxon>
        <taxon>Dikarya</taxon>
        <taxon>Ascomycota</taxon>
        <taxon>Saccharomycotina</taxon>
        <taxon>Saccharomycetes</taxon>
        <taxon>Saccharomycetales</taxon>
        <taxon>Saccharomycetaceae</taxon>
        <taxon>Saccharomyces</taxon>
    </lineage>
</organism>
<name>SPO16_YEAST</name>
<comment type="function">
    <text>Necessary for efficient spore formation.</text>
</comment>
<reference key="1">
    <citation type="journal article" date="1990" name="Mol. Cell. Biol.">
        <title>Complementary transcripts from two genes necessary for normal meiosis in the yeast Saccharomyces cerevisiae.</title>
        <authorList>
            <person name="Malavasic M.J."/>
            <person name="Elder R.T."/>
        </authorList>
    </citation>
    <scope>NUCLEOTIDE SEQUENCE [GENOMIC DNA]</scope>
</reference>
<reference key="2">
    <citation type="journal article" date="1994" name="Science">
        <title>Complete nucleotide sequence of Saccharomyces cerevisiae chromosome VIII.</title>
        <authorList>
            <person name="Johnston M."/>
            <person name="Andrews S."/>
            <person name="Brinkman R."/>
            <person name="Cooper J."/>
            <person name="Ding H."/>
            <person name="Dover J."/>
            <person name="Du Z."/>
            <person name="Favello A."/>
            <person name="Fulton L."/>
            <person name="Gattung S."/>
            <person name="Geisel C."/>
            <person name="Kirsten J."/>
            <person name="Kucaba T."/>
            <person name="Hillier L.W."/>
            <person name="Jier M."/>
            <person name="Johnston L."/>
            <person name="Langston Y."/>
            <person name="Latreille P."/>
            <person name="Louis E.J."/>
            <person name="Macri C."/>
            <person name="Mardis E."/>
            <person name="Menezes S."/>
            <person name="Mouser L."/>
            <person name="Nhan M."/>
            <person name="Rifkin L."/>
            <person name="Riles L."/>
            <person name="St Peter H."/>
            <person name="Trevaskis E."/>
            <person name="Vaughan K."/>
            <person name="Vignati D."/>
            <person name="Wilcox L."/>
            <person name="Wohldman P."/>
            <person name="Waterston R."/>
            <person name="Wilson R."/>
            <person name="Vaudin M."/>
        </authorList>
    </citation>
    <scope>NUCLEOTIDE SEQUENCE [LARGE SCALE GENOMIC DNA]</scope>
    <source>
        <strain>ATCC 204508 / S288c</strain>
    </source>
</reference>
<reference key="3">
    <citation type="journal article" date="2014" name="G3 (Bethesda)">
        <title>The reference genome sequence of Saccharomyces cerevisiae: Then and now.</title>
        <authorList>
            <person name="Engel S.R."/>
            <person name="Dietrich F.S."/>
            <person name="Fisk D.G."/>
            <person name="Binkley G."/>
            <person name="Balakrishnan R."/>
            <person name="Costanzo M.C."/>
            <person name="Dwight S.S."/>
            <person name="Hitz B.C."/>
            <person name="Karra K."/>
            <person name="Nash R.S."/>
            <person name="Weng S."/>
            <person name="Wong E.D."/>
            <person name="Lloyd P."/>
            <person name="Skrzypek M.S."/>
            <person name="Miyasato S.R."/>
            <person name="Simison M."/>
            <person name="Cherry J.M."/>
        </authorList>
    </citation>
    <scope>GENOME REANNOTATION</scope>
    <source>
        <strain>ATCC 204508 / S288c</strain>
    </source>
</reference>
<keyword id="KW-0002">3D-structure</keyword>
<keyword id="KW-0469">Meiosis</keyword>
<keyword id="KW-1185">Reference proteome</keyword>
<keyword id="KW-0749">Sporulation</keyword>